<organism>
    <name type="scientific">Pseudomonas aeruginosa (strain ATCC 15692 / DSM 22644 / CIP 104116 / JCM 14847 / LMG 12228 / 1C / PRS 101 / PAO1)</name>
    <dbReference type="NCBI Taxonomy" id="208964"/>
    <lineage>
        <taxon>Bacteria</taxon>
        <taxon>Pseudomonadati</taxon>
        <taxon>Pseudomonadota</taxon>
        <taxon>Gammaproteobacteria</taxon>
        <taxon>Pseudomonadales</taxon>
        <taxon>Pseudomonadaceae</taxon>
        <taxon>Pseudomonas</taxon>
    </lineage>
</organism>
<comment type="function">
    <text evidence="2">Catalyzes the condensation of octanoyl-CoA, obtained from exogenously supplied fatty acids via beta-oxidation, with malonyl-[acyl-carrier protein], forming 3-oxodecanoyl-[acyl-carrier protein], an intermediate of the fatty acid elongation cycle that can then be extended to supply all of the cellular fatty acid needs. The enzyme thereby shunts fatty acid degradation intermediates from the beta-oxidation pathway into de novo fatty acid biosynthesis.</text>
</comment>
<comment type="catalytic activity">
    <reaction evidence="2">
        <text>octanoyl-CoA + malonyl-[ACP] + H(+) = 3-oxodecanoyl-[ACP] + CO2 + CoA</text>
        <dbReference type="Rhea" id="RHEA:42264"/>
        <dbReference type="Rhea" id="RHEA-COMP:9623"/>
        <dbReference type="Rhea" id="RHEA-COMP:9637"/>
        <dbReference type="ChEBI" id="CHEBI:15378"/>
        <dbReference type="ChEBI" id="CHEBI:16526"/>
        <dbReference type="ChEBI" id="CHEBI:57287"/>
        <dbReference type="ChEBI" id="CHEBI:57386"/>
        <dbReference type="ChEBI" id="CHEBI:78449"/>
        <dbReference type="ChEBI" id="CHEBI:78464"/>
        <dbReference type="EC" id="2.3.1.207"/>
    </reaction>
</comment>
<comment type="pathway">
    <text evidence="2">Lipid metabolism; fatty acid biosynthesis.</text>
</comment>
<comment type="similarity">
    <text evidence="3">Belongs to the thiolase-like superfamily. Beta-ketoacyl-ACP synthases family.</text>
</comment>
<reference key="1">
    <citation type="journal article" date="2000" name="Nature">
        <title>Complete genome sequence of Pseudomonas aeruginosa PAO1, an opportunistic pathogen.</title>
        <authorList>
            <person name="Stover C.K."/>
            <person name="Pham X.-Q.T."/>
            <person name="Erwin A.L."/>
            <person name="Mizoguchi S.D."/>
            <person name="Warrener P."/>
            <person name="Hickey M.J."/>
            <person name="Brinkman F.S.L."/>
            <person name="Hufnagle W.O."/>
            <person name="Kowalik D.J."/>
            <person name="Lagrou M."/>
            <person name="Garber R.L."/>
            <person name="Goltry L."/>
            <person name="Tolentino E."/>
            <person name="Westbrock-Wadman S."/>
            <person name="Yuan Y."/>
            <person name="Brody L.L."/>
            <person name="Coulter S.N."/>
            <person name="Folger K.R."/>
            <person name="Kas A."/>
            <person name="Larbig K."/>
            <person name="Lim R.M."/>
            <person name="Smith K.A."/>
            <person name="Spencer D.H."/>
            <person name="Wong G.K.-S."/>
            <person name="Wu Z."/>
            <person name="Paulsen I.T."/>
            <person name="Reizer J."/>
            <person name="Saier M.H. Jr."/>
            <person name="Hancock R.E.W."/>
            <person name="Lory S."/>
            <person name="Olson M.V."/>
        </authorList>
    </citation>
    <scope>NUCLEOTIDE SEQUENCE [LARGE SCALE GENOMIC DNA]</scope>
    <source>
        <strain>ATCC 15692 / DSM 22644 / CIP 104116 / JCM 14847 / LMG 12228 / 1C / PRS 101 / PAO1</strain>
    </source>
</reference>
<reference key="2">
    <citation type="journal article" date="2012" name="J. Bacteriol.">
        <title>Pseudomonas aeruginosa directly shunts beta-oxidation degradation intermediates into de novo fatty acid biosynthesis.</title>
        <authorList>
            <person name="Yuan Y."/>
            <person name="Leeds J.A."/>
            <person name="Meredith T.C."/>
        </authorList>
    </citation>
    <scope>FUNCTION</scope>
    <scope>CATALYTIC ACTIVITY</scope>
    <scope>PATHWAY</scope>
    <source>
        <strain>ATCC 15692 / DSM 22644 / CIP 104116 / JCM 14847 / LMG 12228 / 1C / PRS 101 / PAO1</strain>
    </source>
</reference>
<accession>Q9HYV7</accession>
<feature type="chain" id="PRO_0000430809" description="Beta-ketodecanoyl-[acyl-carrier-protein] synthase">
    <location>
        <begin position="1"/>
        <end position="350"/>
    </location>
</feature>
<feature type="active site" evidence="1">
    <location>
        <position position="133"/>
    </location>
</feature>
<evidence type="ECO:0000250" key="1">
    <source>
        <dbReference type="UniProtKB" id="P0AAI5"/>
    </source>
</evidence>
<evidence type="ECO:0000269" key="2">
    <source>
    </source>
</evidence>
<evidence type="ECO:0000305" key="3"/>
<evidence type="ECO:0000312" key="4">
    <source>
        <dbReference type="EMBL" id="AAG06674.1"/>
    </source>
</evidence>
<gene>
    <name evidence="4" type="ordered locus">PA3286</name>
</gene>
<keyword id="KW-0012">Acyltransferase</keyword>
<keyword id="KW-1185">Reference proteome</keyword>
<keyword id="KW-0808">Transferase</keyword>
<sequence length="350" mass="38171">MESFNTFVRQYNDQHAEAIAKGELEALAESSSAFIEKASGIKSRFVMNKEGILDPQRMVPYLPERSNDEWSILCEMAVAAAREALQRAGRSAADIDGVIVACSNLQRAYPAIAVEVQAALGIQGYGYDMNVACSSATFGIQAATTAIQTGQARAILMVNPEICTGHLNFRDRDSHFIFGDACTAVIVERADLAVSKHQFDIVSTRLLTQFSNNIRNNFGFLNRADESGIGKRDKLFVQEGRKVFKDVCPMVAELIGEHLAANEIQVAEVKRFWLHQANLNMNLLITRKLLGRDAEAHEAPVILDSYANTSSAGSVIALHKHQDDLPSGAIGVLSSFGAGYSIGSVILRKH</sequence>
<dbReference type="EC" id="2.3.1.207" evidence="2"/>
<dbReference type="EMBL" id="AE004091">
    <property type="protein sequence ID" value="AAG06674.1"/>
    <property type="molecule type" value="Genomic_DNA"/>
</dbReference>
<dbReference type="PIR" id="E83236">
    <property type="entry name" value="E83236"/>
</dbReference>
<dbReference type="RefSeq" id="NP_251976.1">
    <property type="nucleotide sequence ID" value="NC_002516.2"/>
</dbReference>
<dbReference type="RefSeq" id="WP_003119670.1">
    <property type="nucleotide sequence ID" value="NC_002516.2"/>
</dbReference>
<dbReference type="SMR" id="Q9HYV7"/>
<dbReference type="STRING" id="208964.PA3286"/>
<dbReference type="PaxDb" id="208964-PA3286"/>
<dbReference type="GeneID" id="882449"/>
<dbReference type="KEGG" id="pae:PA3286"/>
<dbReference type="PATRIC" id="fig|208964.12.peg.3437"/>
<dbReference type="PseudoCAP" id="PA3286"/>
<dbReference type="HOGENOM" id="CLU_039592_4_2_6"/>
<dbReference type="InParanoid" id="Q9HYV7"/>
<dbReference type="OrthoDB" id="4336181at2"/>
<dbReference type="PhylomeDB" id="Q9HYV7"/>
<dbReference type="BioCyc" id="MetaCyc:MONOMER-17586"/>
<dbReference type="BioCyc" id="PAER208964:G1FZ6-3347-MONOMER"/>
<dbReference type="UniPathway" id="UPA00094"/>
<dbReference type="Proteomes" id="UP000002438">
    <property type="component" value="Chromosome"/>
</dbReference>
<dbReference type="GO" id="GO:0004315">
    <property type="term" value="F:3-oxoacyl-[acyl-carrier-protein] synthase activity"/>
    <property type="evidence" value="ECO:0007669"/>
    <property type="project" value="InterPro"/>
</dbReference>
<dbReference type="GO" id="GO:0061990">
    <property type="term" value="F:beta-ketodecanoyl-[acyl-carrier-protein] synthase activity"/>
    <property type="evidence" value="ECO:0000315"/>
    <property type="project" value="CACAO"/>
</dbReference>
<dbReference type="GO" id="GO:0006633">
    <property type="term" value="P:fatty acid biosynthetic process"/>
    <property type="evidence" value="ECO:0007669"/>
    <property type="project" value="UniProtKB-UniPathway"/>
</dbReference>
<dbReference type="GO" id="GO:0042758">
    <property type="term" value="P:long-chain fatty acid catabolic process"/>
    <property type="evidence" value="ECO:0000315"/>
    <property type="project" value="CACAO"/>
</dbReference>
<dbReference type="GO" id="GO:0044550">
    <property type="term" value="P:secondary metabolite biosynthetic process"/>
    <property type="evidence" value="ECO:0000318"/>
    <property type="project" value="GO_Central"/>
</dbReference>
<dbReference type="CDD" id="cd00830">
    <property type="entry name" value="KAS_III"/>
    <property type="match status" value="1"/>
</dbReference>
<dbReference type="FunFam" id="3.40.47.10:FF:000049">
    <property type="entry name" value="3-oxoacyl-Acyl-carrier-protein synthase III"/>
    <property type="match status" value="1"/>
</dbReference>
<dbReference type="Gene3D" id="3.40.47.10">
    <property type="match status" value="2"/>
</dbReference>
<dbReference type="InterPro" id="IPR013747">
    <property type="entry name" value="ACP_syn_III_C"/>
</dbReference>
<dbReference type="InterPro" id="IPR013751">
    <property type="entry name" value="ACP_syn_III_N"/>
</dbReference>
<dbReference type="InterPro" id="IPR016039">
    <property type="entry name" value="Thiolase-like"/>
</dbReference>
<dbReference type="NCBIfam" id="NF005703">
    <property type="entry name" value="PRK07515.1"/>
    <property type="match status" value="1"/>
</dbReference>
<dbReference type="PANTHER" id="PTHR34069">
    <property type="entry name" value="3-OXOACYL-[ACYL-CARRIER-PROTEIN] SYNTHASE 3"/>
    <property type="match status" value="1"/>
</dbReference>
<dbReference type="PANTHER" id="PTHR34069:SF2">
    <property type="entry name" value="BETA-KETOACYL-[ACYL-CARRIER-PROTEIN] SYNTHASE III"/>
    <property type="match status" value="1"/>
</dbReference>
<dbReference type="Pfam" id="PF08545">
    <property type="entry name" value="ACP_syn_III"/>
    <property type="match status" value="1"/>
</dbReference>
<dbReference type="Pfam" id="PF08541">
    <property type="entry name" value="ACP_syn_III_C"/>
    <property type="match status" value="1"/>
</dbReference>
<dbReference type="SUPFAM" id="SSF53901">
    <property type="entry name" value="Thiolase-like"/>
    <property type="match status" value="1"/>
</dbReference>
<protein>
    <recommendedName>
        <fullName evidence="3">Beta-ketodecanoyl-[acyl-carrier-protein] synthase</fullName>
        <ecNumber evidence="2">2.3.1.207</ecNumber>
    </recommendedName>
</protein>
<name>BEKAS_PSEAE</name>
<proteinExistence type="evidence at protein level"/>